<sequence length="443" mass="47916">MEVTADQPRWVSHHHPAVLNGQHPDTHHPGLSHSYMDAAQYPLPEEVDVLFNIDGQGNHVPPYYGNSVRATVQRYPPTHHGSQVCRPPLLHGSLPWLDGGKALGSHHTASPWNLSPFSKTSIHHGSPGPLSVYPPASSSSLSGGHASPHLFTFPPTPPKDVSPDPSLSTPGSAGSARQDEKECLKYQVPLPDSMKLESSHSRGSMTALGGASSSTHHPITTYPPYVPEYSSGLFPPSSLLGGSPTGFGCKSRPKARSSTGRECVNCGATSTPLWRRDGTGHYLCNACGLYHKMNGQNRPLIKPKRRLSAARRAGTSCANCQTTTTTLWRRNANGDPVCNACGLYYKLHNINRPLTMKKEGIQTRNRKMSSKSKKCKKVHDSLEDFPKNSSFNPAALSRHMSSLSHISPFSHSSHMLTTPTPMHPPSSLSFGPHHPSSMVTAMG</sequence>
<organism>
    <name type="scientific">Homo sapiens</name>
    <name type="common">Human</name>
    <dbReference type="NCBI Taxonomy" id="9606"/>
    <lineage>
        <taxon>Eukaryota</taxon>
        <taxon>Metazoa</taxon>
        <taxon>Chordata</taxon>
        <taxon>Craniata</taxon>
        <taxon>Vertebrata</taxon>
        <taxon>Euteleostomi</taxon>
        <taxon>Mammalia</taxon>
        <taxon>Eutheria</taxon>
        <taxon>Euarchontoglires</taxon>
        <taxon>Primates</taxon>
        <taxon>Haplorrhini</taxon>
        <taxon>Catarrhini</taxon>
        <taxon>Hominidae</taxon>
        <taxon>Homo</taxon>
    </lineage>
</organism>
<protein>
    <recommendedName>
        <fullName>Trans-acting T-cell-specific transcription factor GATA-3</fullName>
    </recommendedName>
    <alternativeName>
        <fullName>GATA-binding factor 3</fullName>
    </alternativeName>
</protein>
<feature type="chain" id="PRO_0000083408" description="Trans-acting T-cell-specific transcription factor GATA-3">
    <location>
        <begin position="1"/>
        <end position="443"/>
    </location>
</feature>
<feature type="zinc finger region" description="GATA-type 1" evidence="3">
    <location>
        <begin position="263"/>
        <end position="287"/>
    </location>
</feature>
<feature type="zinc finger region" description="GATA-type 2" evidence="3">
    <location>
        <begin position="317"/>
        <end position="341"/>
    </location>
</feature>
<feature type="region of interest" description="Interaction with TBX21" evidence="2">
    <location>
        <begin position="1"/>
        <end position="258"/>
    </location>
</feature>
<feature type="region of interest" description="Disordered" evidence="4">
    <location>
        <begin position="1"/>
        <end position="29"/>
    </location>
</feature>
<feature type="region of interest" description="Disordered" evidence="4">
    <location>
        <begin position="128"/>
        <end position="180"/>
    </location>
</feature>
<feature type="region of interest" description="Disordered" evidence="4">
    <location>
        <begin position="194"/>
        <end position="216"/>
    </location>
</feature>
<feature type="region of interest" description="Flexible linker">
    <location>
        <begin position="288"/>
        <end position="316"/>
    </location>
</feature>
<feature type="region of interest" description="Disordered" evidence="4">
    <location>
        <begin position="361"/>
        <end position="389"/>
    </location>
</feature>
<feature type="region of interest" description="Disordered" evidence="4">
    <location>
        <begin position="414"/>
        <end position="443"/>
    </location>
</feature>
<feature type="short sequence motif" description="YxKxHxxxRP" evidence="1">
    <location>
        <begin position="344"/>
        <end position="353"/>
    </location>
</feature>
<feature type="compositionally biased region" description="Low complexity" evidence="4">
    <location>
        <begin position="135"/>
        <end position="150"/>
    </location>
</feature>
<feature type="compositionally biased region" description="Basic residues" evidence="4">
    <location>
        <begin position="364"/>
        <end position="377"/>
    </location>
</feature>
<feature type="compositionally biased region" description="Low complexity" evidence="4">
    <location>
        <begin position="414"/>
        <end position="429"/>
    </location>
</feature>
<feature type="modified residue" description="Phosphoserine" evidence="16">
    <location>
        <position position="115"/>
    </location>
</feature>
<feature type="modified residue" description="Phosphoserine" evidence="16">
    <location>
        <position position="162"/>
    </location>
</feature>
<feature type="splice variant" id="VSP_001598" description="In isoform 2." evidence="12 13 14">
    <original>T</original>
    <variation>TE</variation>
    <location>
        <position position="259"/>
    </location>
</feature>
<feature type="sequence variant" id="VAR_019202" description="In dbSNP:rs11567901." evidence="11">
    <original>G</original>
    <variation>S</variation>
    <location>
        <position position="242"/>
    </location>
</feature>
<feature type="sequence variant" id="VAR_017818" description="In HDR; dbSNP:rs104894163." evidence="6">
    <original>W</original>
    <variation>R</variation>
    <location>
        <position position="274"/>
    </location>
</feature>
<feature type="sequence variant" id="VAR_075427" description="In HDR; loss of enhancer activity on PTH gene promoter and on GATA responsive element; dbSNP:rs2131501118." evidence="10">
    <original>R</original>
    <variation>Q</variation>
    <location>
        <position position="298"/>
    </location>
</feature>
<feature type="sequence variant" id="VAR_033025" description="In a breast cancer sample; somatic mutation." evidence="8">
    <original>R</original>
    <variation>L</variation>
    <location>
        <position position="366"/>
    </location>
</feature>
<feature type="sequence conflict" description="In Ref. 4; AAA35870." evidence="15" ref="4">
    <original>V</original>
    <variation>L</variation>
    <location>
        <position position="11"/>
    </location>
</feature>
<feature type="sequence conflict" description="In Ref. 2; CAA38877." evidence="15" ref="2">
    <original>A</original>
    <variation>V</variation>
    <location>
        <position position="102"/>
    </location>
</feature>
<feature type="sequence conflict" description="In Ref. 2; CAA38877." evidence="15" ref="2">
    <original>A</original>
    <variation>G</variation>
    <location>
        <position position="173"/>
    </location>
</feature>
<feature type="sequence conflict" description="In Ref. 4; AAA35870." evidence="15" ref="4">
    <original>I</original>
    <variation>Y</variation>
    <location>
        <position position="219"/>
    </location>
</feature>
<feature type="sequence conflict" description="In Ref. 4; AAA35870." evidence="15" ref="4">
    <original>YV</original>
    <variation>TC</variation>
    <location>
        <begin position="225"/>
        <end position="226"/>
    </location>
</feature>
<feature type="sequence conflict" description="In Ref. 4; AAA35870." evidence="15" ref="4">
    <original>NA</original>
    <variation>RR</variation>
    <location>
        <begin position="285"/>
        <end position="286"/>
    </location>
</feature>
<feature type="sequence conflict" description="In Ref. 4; AAA35870." evidence="15" ref="4">
    <original>P</original>
    <variation>A</variation>
    <location>
        <position position="425"/>
    </location>
</feature>
<feature type="sequence conflict" description="In Ref. 4; AAA35870." evidence="15" ref="4">
    <original>A</original>
    <variation>G</variation>
    <location>
        <position position="441"/>
    </location>
</feature>
<feature type="turn" evidence="18">
    <location>
        <begin position="264"/>
        <end position="266"/>
    </location>
</feature>
<feature type="helix" evidence="18">
    <location>
        <begin position="285"/>
        <end position="294"/>
    </location>
</feature>
<feature type="strand" evidence="17">
    <location>
        <begin position="307"/>
        <end position="313"/>
    </location>
</feature>
<feature type="turn" evidence="18">
    <location>
        <begin position="318"/>
        <end position="320"/>
    </location>
</feature>
<feature type="helix" evidence="18">
    <location>
        <begin position="339"/>
        <end position="348"/>
    </location>
</feature>
<feature type="helix" evidence="18">
    <location>
        <begin position="354"/>
        <end position="356"/>
    </location>
</feature>
<comment type="function">
    <text evidence="2 9">Transcriptional activator which binds to the enhancer of the T-cell receptor alpha and delta genes. Binds to the consensus sequence 5'-AGATAG-3'. Required for the T-helper 2 (Th2) differentiation process following immune and inflammatory responses. Positively regulates ASB2 expression (By similarity). Coordinates macrophage transcriptional activation and UCP2-dependent metabolic reprogramming in response to IL33. Upon tissue injury, acts downstream of IL33 signaling to drive differentiation of inflammation-resolving alternatively activated macrophages.</text>
</comment>
<comment type="subunit">
    <text evidence="7">Interacts with TBX21 ('Tyr-530' phosphorylated form).</text>
</comment>
<comment type="interaction">
    <interactant intactId="EBI-6664760">
        <id>P23771</id>
    </interactant>
    <interactant intactId="EBI-77797">
        <id>P35609</id>
        <label>ACTN2</label>
    </interactant>
    <organismsDiffer>false</organismsDiffer>
    <experiments>3</experiments>
</comment>
<comment type="interaction">
    <interactant intactId="EBI-6664760">
        <id>P23771</id>
    </interactant>
    <interactant intactId="EBI-25837549">
        <id>P28329-3</id>
        <label>CHAT</label>
    </interactant>
    <organismsDiffer>false</organismsDiffer>
    <experiments>3</experiments>
</comment>
<comment type="interaction">
    <interactant intactId="EBI-6664760">
        <id>P23771</id>
    </interactant>
    <interactant intactId="EBI-744366">
        <id>Q96KQ7</id>
        <label>EHMT2</label>
    </interactant>
    <organismsDiffer>false</organismsDiffer>
    <experiments>20</experiments>
</comment>
<comment type="interaction">
    <interactant intactId="EBI-6664760">
        <id>P23771</id>
    </interactant>
    <interactant intactId="EBI-348399">
        <id>P22607</id>
        <label>FGFR3</label>
    </interactant>
    <organismsDiffer>false</organismsDiffer>
    <experiments>3</experiments>
</comment>
<comment type="interaction">
    <interactant intactId="EBI-6664760">
        <id>P23771</id>
    </interactant>
    <interactant intactId="EBI-21194843">
        <id>Q9NP62</id>
        <label>GCM1</label>
    </interactant>
    <organismsDiffer>false</organismsDiffer>
    <experiments>9</experiments>
</comment>
<comment type="interaction">
    <interactant intactId="EBI-6664760">
        <id>P23771</id>
    </interactant>
    <interactant intactId="EBI-607682">
        <id>O15379</id>
        <label>HDAC3</label>
    </interactant>
    <organismsDiffer>false</organismsDiffer>
    <experiments>7</experiments>
</comment>
<comment type="interaction">
    <interactant intactId="EBI-6664760">
        <id>P23771</id>
    </interactant>
    <interactant intactId="EBI-715576">
        <id>Q9UQL6</id>
        <label>HDAC5</label>
    </interactant>
    <organismsDiffer>false</organismsDiffer>
    <experiments>4</experiments>
</comment>
<comment type="interaction">
    <interactant intactId="EBI-6664760">
        <id>P23771</id>
    </interactant>
    <interactant intactId="EBI-447269">
        <id>Q16665</id>
        <label>HIF1A</label>
    </interactant>
    <organismsDiffer>false</organismsDiffer>
    <experiments>3</experiments>
</comment>
<comment type="interaction">
    <interactant intactId="EBI-6664760">
        <id>P23771</id>
    </interactant>
    <interactant intactId="EBI-1348">
        <id>P06239</id>
        <label>LCK</label>
    </interactant>
    <organismsDiffer>false</organismsDiffer>
    <experiments>3</experiments>
</comment>
<comment type="interaction">
    <interactant intactId="EBI-6664760">
        <id>P23771</id>
    </interactant>
    <interactant intactId="EBI-2461787">
        <id>Q9BTC8</id>
        <label>MTA3</label>
    </interactant>
    <organismsDiffer>false</organismsDiffer>
    <experiments>18</experiments>
</comment>
<comment type="interaction">
    <interactant intactId="EBI-6664760">
        <id>P23771</id>
    </interactant>
    <interactant intactId="EBI-348380">
        <id>P25788</id>
        <label>PSMA3</label>
    </interactant>
    <organismsDiffer>false</organismsDiffer>
    <experiments>3</experiments>
</comment>
<comment type="interaction">
    <interactant intactId="EBI-6664760">
        <id>P23771</id>
    </interactant>
    <interactant intactId="EBI-3922312">
        <id>Q9UL17</id>
        <label>TBX21</label>
    </interactant>
    <organismsDiffer>false</organismsDiffer>
    <experiments>6</experiments>
</comment>
<comment type="interaction">
    <interactant intactId="EBI-6672518">
        <id>P23771-2</id>
    </interactant>
    <interactant intactId="EBI-3867333">
        <id>A8MQ03</id>
        <label>CYSRT1</label>
    </interactant>
    <organismsDiffer>false</organismsDiffer>
    <experiments>3</experiments>
</comment>
<comment type="interaction">
    <interactant intactId="EBI-6672518">
        <id>P23771-2</id>
    </interactant>
    <interactant intactId="EBI-10210845">
        <id>P59990</id>
        <label>KRTAP12-1</label>
    </interactant>
    <organismsDiffer>false</organismsDiffer>
    <experiments>3</experiments>
</comment>
<comment type="interaction">
    <interactant intactId="EBI-6672518">
        <id>P23771-2</id>
    </interactant>
    <interactant intactId="EBI-11953846">
        <id>Q52LG2</id>
        <label>KRTAP13-2</label>
    </interactant>
    <organismsDiffer>false</organismsDiffer>
    <experiments>3</experiments>
</comment>
<comment type="interaction">
    <interactant intactId="EBI-6672518">
        <id>P23771-2</id>
    </interactant>
    <interactant intactId="EBI-11962084">
        <id>Q3LI66</id>
        <label>KRTAP6-2</label>
    </interactant>
    <organismsDiffer>false</organismsDiffer>
    <experiments>3</experiments>
</comment>
<comment type="interaction">
    <interactant intactId="EBI-6672518">
        <id>P23771-2</id>
    </interactant>
    <interactant intactId="EBI-22311199">
        <id>Q3LI67</id>
        <label>KRTAP6-3</label>
    </interactant>
    <organismsDiffer>false</organismsDiffer>
    <experiments>3</experiments>
</comment>
<comment type="interaction">
    <interactant intactId="EBI-6672518">
        <id>P23771-2</id>
    </interactant>
    <interactant intactId="EBI-949255">
        <id>Q58EX7</id>
        <label>PLEKHG4</label>
    </interactant>
    <organismsDiffer>false</organismsDiffer>
    <experiments>3</experiments>
</comment>
<comment type="subcellular location">
    <subcellularLocation>
        <location>Nucleus</location>
    </subcellularLocation>
</comment>
<comment type="alternative products">
    <event type="alternative splicing"/>
    <isoform>
        <id>P23771-1</id>
        <name>1</name>
        <sequence type="displayed"/>
    </isoform>
    <isoform>
        <id>P23771-2</id>
        <name>2</name>
        <sequence type="described" ref="VSP_001598"/>
    </isoform>
</comment>
<comment type="tissue specificity">
    <text>T-cells and endothelial cells.</text>
</comment>
<comment type="domain">
    <text>Binds DNA via the 2 GATA-type zinc fingers. Each zinc finger may bind either adjacent sites in a palindromic motif, or a different DNA molecule allowing looping and long-range gene regulation.</text>
</comment>
<comment type="domain">
    <text evidence="1">The YxKxHxxxRP motif is critical for DNA-binding and function.</text>
</comment>
<comment type="disease" evidence="5 6 10">
    <disease id="DI-01792">
        <name>Hypoparathyroidism, sensorineural deafness, and renal disease</name>
        <acronym>HDR</acronym>
        <description>A disease characterized by steroid-resistant nephrosis with progressive renal failure, hypoparathyroidism, sensorineural deafness, and renal dysplasia.</description>
        <dbReference type="MIM" id="146255"/>
    </disease>
    <text>The disease is caused by variants affecting the gene represented in this entry.</text>
</comment>
<comment type="online information" name="Atlas of Genetics and Cytogenetics in Oncology and Haematology">
    <link uri="https://atlasgeneticsoncology.org/gene/107/GATA3"/>
</comment>
<proteinExistence type="evidence at protein level"/>
<name>GATA3_HUMAN</name>
<keyword id="KW-0002">3D-structure</keyword>
<keyword id="KW-0010">Activator</keyword>
<keyword id="KW-0025">Alternative splicing</keyword>
<keyword id="KW-0209">Deafness</keyword>
<keyword id="KW-0225">Disease variant</keyword>
<keyword id="KW-0238">DNA-binding</keyword>
<keyword id="KW-0391">Immunity</keyword>
<keyword id="KW-0399">Innate immunity</keyword>
<keyword id="KW-0479">Metal-binding</keyword>
<keyword id="KW-0539">Nucleus</keyword>
<keyword id="KW-0597">Phosphoprotein</keyword>
<keyword id="KW-1267">Proteomics identification</keyword>
<keyword id="KW-1185">Reference proteome</keyword>
<keyword id="KW-0677">Repeat</keyword>
<keyword id="KW-0804">Transcription</keyword>
<keyword id="KW-0805">Transcription regulation</keyword>
<keyword id="KW-0862">Zinc</keyword>
<keyword id="KW-0863">Zinc-finger</keyword>
<accession>P23771</accession>
<accession>Q5VWG7</accession>
<accession>Q5VWG8</accession>
<accession>Q96J16</accession>
<reference key="1">
    <citation type="journal article" date="1991" name="EMBO J.">
        <title>A T-cell specific TCR delta DNA binding protein is a member of the human GATA family.</title>
        <authorList>
            <person name="Joulin V."/>
            <person name="Bories D."/>
            <person name="Eleouet J.-F."/>
            <person name="Labastie M.-C."/>
            <person name="Chretien S."/>
            <person name="Mattei M.-G."/>
            <person name="Romeo P.-H."/>
        </authorList>
    </citation>
    <scope>NUCLEOTIDE SEQUENCE [MRNA] (ISOFORM 1)</scope>
    <source>
        <tissue>T-cell</tissue>
    </source>
</reference>
<reference key="2">
    <citation type="journal article" date="1991" name="EMBO J.">
        <title>Human GATA-3: a lineage-restricted transcription factor that regulates the expression of the T cell receptor alpha gene.</title>
        <authorList>
            <person name="Ho I.-C."/>
            <person name="Vorhees P."/>
            <person name="Marin N."/>
            <person name="Oakley B.K."/>
            <person name="Tsai S.-F."/>
            <person name="Orkin S.H."/>
            <person name="Leiden J.M."/>
        </authorList>
    </citation>
    <scope>NUCLEOTIDE SEQUENCE [MRNA] (ISOFORM 1)</scope>
    <source>
        <tissue>T-cell</tissue>
    </source>
</reference>
<reference key="3">
    <citation type="journal article" date="1991" name="Mol. Cell. Biol.">
        <title>Murine and human T-lymphocyte GATA-3 factors mediate transcription through a cis-regulatory element within the human T-cell receptor delta gene enhancer.</title>
        <authorList>
            <person name="Ko L.J."/>
            <person name="Yamamoto M."/>
            <person name="Leonard M.W."/>
            <person name="George K.M."/>
            <person name="Ting P."/>
            <person name="Engel J.D."/>
        </authorList>
    </citation>
    <scope>NUCLEOTIDE SEQUENCE [MRNA] (ISOFORM 2)</scope>
    <source>
        <tissue>T-cell</tissue>
    </source>
</reference>
<reference key="4">
    <citation type="journal article" date="1991" name="Proc. Natl. Acad. Sci. U.S.A.">
        <title>The human enhancer-binding protein Gata3 binds to several T-cell receptor regulatory elements.</title>
        <authorList>
            <person name="Marine J."/>
            <person name="Winoto A."/>
        </authorList>
    </citation>
    <scope>NUCLEOTIDE SEQUENCE [MRNA] (ISOFORM 2)</scope>
</reference>
<reference key="5">
    <citation type="submission" date="2003-12" db="EMBL/GenBank/DDBJ databases">
        <authorList>
            <consortium name="SeattleSNPs variation discovery resource"/>
        </authorList>
    </citation>
    <scope>NUCLEOTIDE SEQUENCE [GENOMIC DNA]</scope>
    <scope>VARIANT SER-242</scope>
</reference>
<reference key="6">
    <citation type="journal article" date="2004" name="Nature">
        <title>The DNA sequence and comparative analysis of human chromosome 10.</title>
        <authorList>
            <person name="Deloukas P."/>
            <person name="Earthrowl M.E."/>
            <person name="Grafham D.V."/>
            <person name="Rubenfield M."/>
            <person name="French L."/>
            <person name="Steward C.A."/>
            <person name="Sims S.K."/>
            <person name="Jones M.C."/>
            <person name="Searle S."/>
            <person name="Scott C."/>
            <person name="Howe K."/>
            <person name="Hunt S.E."/>
            <person name="Andrews T.D."/>
            <person name="Gilbert J.G.R."/>
            <person name="Swarbreck D."/>
            <person name="Ashurst J.L."/>
            <person name="Taylor A."/>
            <person name="Battles J."/>
            <person name="Bird C.P."/>
            <person name="Ainscough R."/>
            <person name="Almeida J.P."/>
            <person name="Ashwell R.I.S."/>
            <person name="Ambrose K.D."/>
            <person name="Babbage A.K."/>
            <person name="Bagguley C.L."/>
            <person name="Bailey J."/>
            <person name="Banerjee R."/>
            <person name="Bates K."/>
            <person name="Beasley H."/>
            <person name="Bray-Allen S."/>
            <person name="Brown A.J."/>
            <person name="Brown J.Y."/>
            <person name="Burford D.C."/>
            <person name="Burrill W."/>
            <person name="Burton J."/>
            <person name="Cahill P."/>
            <person name="Camire D."/>
            <person name="Carter N.P."/>
            <person name="Chapman J.C."/>
            <person name="Clark S.Y."/>
            <person name="Clarke G."/>
            <person name="Clee C.M."/>
            <person name="Clegg S."/>
            <person name="Corby N."/>
            <person name="Coulson A."/>
            <person name="Dhami P."/>
            <person name="Dutta I."/>
            <person name="Dunn M."/>
            <person name="Faulkner L."/>
            <person name="Frankish A."/>
            <person name="Frankland J.A."/>
            <person name="Garner P."/>
            <person name="Garnett J."/>
            <person name="Gribble S."/>
            <person name="Griffiths C."/>
            <person name="Grocock R."/>
            <person name="Gustafson E."/>
            <person name="Hammond S."/>
            <person name="Harley J.L."/>
            <person name="Hart E."/>
            <person name="Heath P.D."/>
            <person name="Ho T.P."/>
            <person name="Hopkins B."/>
            <person name="Horne J."/>
            <person name="Howden P.J."/>
            <person name="Huckle E."/>
            <person name="Hynds C."/>
            <person name="Johnson C."/>
            <person name="Johnson D."/>
            <person name="Kana A."/>
            <person name="Kay M."/>
            <person name="Kimberley A.M."/>
            <person name="Kershaw J.K."/>
            <person name="Kokkinaki M."/>
            <person name="Laird G.K."/>
            <person name="Lawlor S."/>
            <person name="Lee H.M."/>
            <person name="Leongamornlert D.A."/>
            <person name="Laird G."/>
            <person name="Lloyd C."/>
            <person name="Lloyd D.M."/>
            <person name="Loveland J."/>
            <person name="Lovell J."/>
            <person name="McLaren S."/>
            <person name="McLay K.E."/>
            <person name="McMurray A."/>
            <person name="Mashreghi-Mohammadi M."/>
            <person name="Matthews L."/>
            <person name="Milne S."/>
            <person name="Nickerson T."/>
            <person name="Nguyen M."/>
            <person name="Overton-Larty E."/>
            <person name="Palmer S.A."/>
            <person name="Pearce A.V."/>
            <person name="Peck A.I."/>
            <person name="Pelan S."/>
            <person name="Phillimore B."/>
            <person name="Porter K."/>
            <person name="Rice C.M."/>
            <person name="Rogosin A."/>
            <person name="Ross M.T."/>
            <person name="Sarafidou T."/>
            <person name="Sehra H.K."/>
            <person name="Shownkeen R."/>
            <person name="Skuce C.D."/>
            <person name="Smith M."/>
            <person name="Standring L."/>
            <person name="Sycamore N."/>
            <person name="Tester J."/>
            <person name="Thorpe A."/>
            <person name="Torcasso W."/>
            <person name="Tracey A."/>
            <person name="Tromans A."/>
            <person name="Tsolas J."/>
            <person name="Wall M."/>
            <person name="Walsh J."/>
            <person name="Wang H."/>
            <person name="Weinstock K."/>
            <person name="West A.P."/>
            <person name="Willey D.L."/>
            <person name="Whitehead S.L."/>
            <person name="Wilming L."/>
            <person name="Wray P.W."/>
            <person name="Young L."/>
            <person name="Chen Y."/>
            <person name="Lovering R.C."/>
            <person name="Moschonas N.K."/>
            <person name="Siebert R."/>
            <person name="Fechtel K."/>
            <person name="Bentley D."/>
            <person name="Durbin R.M."/>
            <person name="Hubbard T."/>
            <person name="Doucette-Stamm L."/>
            <person name="Beck S."/>
            <person name="Smith D.R."/>
            <person name="Rogers J."/>
        </authorList>
    </citation>
    <scope>NUCLEOTIDE SEQUENCE [LARGE SCALE GENOMIC DNA]</scope>
</reference>
<reference key="7">
    <citation type="submission" date="2005-09" db="EMBL/GenBank/DDBJ databases">
        <authorList>
            <person name="Mural R.J."/>
            <person name="Istrail S."/>
            <person name="Sutton G.G."/>
            <person name="Florea L."/>
            <person name="Halpern A.L."/>
            <person name="Mobarry C.M."/>
            <person name="Lippert R."/>
            <person name="Walenz B."/>
            <person name="Shatkay H."/>
            <person name="Dew I."/>
            <person name="Miller J.R."/>
            <person name="Flanigan M.J."/>
            <person name="Edwards N.J."/>
            <person name="Bolanos R."/>
            <person name="Fasulo D."/>
            <person name="Halldorsson B.V."/>
            <person name="Hannenhalli S."/>
            <person name="Turner R."/>
            <person name="Yooseph S."/>
            <person name="Lu F."/>
            <person name="Nusskern D.R."/>
            <person name="Shue B.C."/>
            <person name="Zheng X.H."/>
            <person name="Zhong F."/>
            <person name="Delcher A.L."/>
            <person name="Huson D.H."/>
            <person name="Kravitz S.A."/>
            <person name="Mouchard L."/>
            <person name="Reinert K."/>
            <person name="Remington K.A."/>
            <person name="Clark A.G."/>
            <person name="Waterman M.S."/>
            <person name="Eichler E.E."/>
            <person name="Adams M.D."/>
            <person name="Hunkapiller M.W."/>
            <person name="Myers E.W."/>
            <person name="Venter J.C."/>
        </authorList>
    </citation>
    <scope>NUCLEOTIDE SEQUENCE [LARGE SCALE GENOMIC DNA]</scope>
</reference>
<reference key="8">
    <citation type="journal article" date="2004" name="Genome Res.">
        <title>The status, quality, and expansion of the NIH full-length cDNA project: the Mammalian Gene Collection (MGC).</title>
        <authorList>
            <consortium name="The MGC Project Team"/>
        </authorList>
    </citation>
    <scope>NUCLEOTIDE SEQUENCE [LARGE SCALE MRNA] (ISOFORMS 1 AND 2)</scope>
    <source>
        <tissue>Cervix</tissue>
        <tissue>Placenta</tissue>
    </source>
</reference>
<reference key="9">
    <citation type="journal article" date="2000" name="Nature">
        <title>GATA3 haplo-insufficiency causes human HDR syndrome.</title>
        <authorList>
            <person name="Van Esch H."/>
            <person name="Groenen P."/>
            <person name="Nesbit M.A."/>
            <person name="Schuffenhauer S."/>
            <person name="Lichtner P."/>
            <person name="Vanderlinden G."/>
            <person name="Harding B."/>
            <person name="Beetz R."/>
            <person name="Bilous R.W."/>
            <person name="Holdaway I."/>
            <person name="Shaw N.J."/>
            <person name="Fryns J.-P."/>
            <person name="Van de Ven W."/>
            <person name="Thakker R.V."/>
            <person name="Devriendt K."/>
        </authorList>
    </citation>
    <scope>INVOLVEMENT IN HDR</scope>
</reference>
<reference key="10">
    <citation type="journal article" date="2005" name="Science">
        <title>T helper cell fate specified by kinase-mediated interaction of T-bet with GATA-3.</title>
        <authorList>
            <person name="Hwang E.S."/>
            <person name="Szabo S.J."/>
            <person name="Schwartzberg P.L."/>
            <person name="Glimcher L.H."/>
        </authorList>
    </citation>
    <scope>INTERACTION WITH TBX21</scope>
</reference>
<reference key="11">
    <citation type="journal article" date="2009" name="Sci. Signal.">
        <title>Quantitative phosphoproteomic analysis of T cell receptor signaling reveals system-wide modulation of protein-protein interactions.</title>
        <authorList>
            <person name="Mayya V."/>
            <person name="Lundgren D.H."/>
            <person name="Hwang S.-I."/>
            <person name="Rezaul K."/>
            <person name="Wu L."/>
            <person name="Eng J.K."/>
            <person name="Rodionov V."/>
            <person name="Han D.K."/>
        </authorList>
    </citation>
    <scope>PHOSPHORYLATION [LARGE SCALE ANALYSIS] AT SER-115 AND SER-162</scope>
    <scope>IDENTIFICATION BY MASS SPECTROMETRY [LARGE SCALE ANALYSIS]</scope>
    <source>
        <tissue>Leukemic T-cell</tissue>
    </source>
</reference>
<reference key="12">
    <citation type="journal article" date="2013" name="PLoS ONE">
        <title>Genome-wide gene expression profiling revealed a critical role for GATA3 in the maintenance of the Th2 cell identity.</title>
        <authorList>
            <person name="Sasaki T."/>
            <person name="Onodera A."/>
            <person name="Hosokawa H."/>
            <person name="Watanabe Y."/>
            <person name="Horiuchi S."/>
            <person name="Yamashita J."/>
            <person name="Tanaka H."/>
            <person name="Ogawa Y."/>
            <person name="Suzuki Y."/>
            <person name="Nakayama T."/>
        </authorList>
    </citation>
    <scope>FUNCTION</scope>
</reference>
<reference key="13">
    <citation type="journal article" date="2012" name="Cell Rep.">
        <title>DNA binding by GATA transcription factor suggests mechanisms of DNA looping and long-range gene regulation.</title>
        <authorList>
            <person name="Chen Y."/>
            <person name="Bates D.L."/>
            <person name="Dey R."/>
            <person name="Chen P.H."/>
            <person name="Machado A.C."/>
            <person name="Laird-Offringa I.A."/>
            <person name="Rohs R."/>
            <person name="Chen L."/>
        </authorList>
    </citation>
    <scope>X-RAY CRYSTALLOGRAPHY (1.6 ANGSTROMS) OF 260-370 IN COMPLEX WITH DNA</scope>
    <scope>GATA-TYPE ZINC FINGERS</scope>
</reference>
<reference key="14">
    <citation type="journal article" date="2001" name="J. Med. Genet.">
        <title>GATA3 abnormalities and the phenotypic spectrum of HDR syndrome.</title>
        <authorList>
            <person name="Muroya K."/>
            <person name="Hasegawa T."/>
            <person name="Ito Y."/>
            <person name="Nagai T."/>
            <person name="Isotani H."/>
            <person name="Iwata Y."/>
            <person name="Yamamoto K."/>
            <person name="Fujimoto S."/>
            <person name="Seishu S."/>
            <person name="Fukushima Y."/>
            <person name="Hasegawa Y."/>
            <person name="Ogata T."/>
        </authorList>
    </citation>
    <scope>VARIANT HDR ARG-274</scope>
</reference>
<reference key="15">
    <citation type="journal article" date="2007" name="Breast Cancer Res.">
        <title>Somatic sequence alterations in twenty-one genes selected by expression profile analysis of breast carcinomas.</title>
        <authorList>
            <person name="Chanock S.J."/>
            <person name="Burdett L."/>
            <person name="Yeager M."/>
            <person name="Llaca V."/>
            <person name="Langeroed A."/>
            <person name="Presswalla S."/>
            <person name="Kaaresen R."/>
            <person name="Strausberg R.L."/>
            <person name="Gerhard D.S."/>
            <person name="Kristensen V."/>
            <person name="Perou C.M."/>
            <person name="Boerresen-Dale A.-L."/>
        </authorList>
    </citation>
    <scope>VARIANT LEU-366</scope>
</reference>
<reference key="16">
    <citation type="journal article" date="2015" name="BMC Endocr. Disord.">
        <title>A novel loss-of-function mutation of GATA3 (p.R299Q) in a Japanese family with Hypoparathyroidism, Deafness, and Renal Dysplasia (HDR) syndrome.</title>
        <authorList>
            <person name="Okawa T."/>
            <person name="Yoshida M."/>
            <person name="Usui T."/>
            <person name="Kudou T."/>
            <person name="Iwasaki Y."/>
            <person name="Fukuoka K."/>
            <person name="Takahashi N."/>
            <person name="Uehara Y."/>
            <person name="Oiso Y."/>
        </authorList>
    </citation>
    <scope>VARIANT HDR GLN-298</scope>
    <scope>CHARACTERIZATION OF VARIANT HDR GLN-298</scope>
</reference>
<gene>
    <name type="primary">GATA3</name>
</gene>
<dbReference type="EMBL" id="X58072">
    <property type="protein sequence ID" value="CAA41102.1"/>
    <property type="molecule type" value="mRNA"/>
</dbReference>
<dbReference type="EMBL" id="X55037">
    <property type="protein sequence ID" value="CAA38877.1"/>
    <property type="molecule type" value="mRNA"/>
</dbReference>
<dbReference type="EMBL" id="X55122">
    <property type="protein sequence ID" value="CAA38916.1"/>
    <property type="molecule type" value="mRNA"/>
</dbReference>
<dbReference type="EMBL" id="M69106">
    <property type="protein sequence ID" value="AAA35870.1"/>
    <property type="molecule type" value="mRNA"/>
</dbReference>
<dbReference type="EMBL" id="AY497006">
    <property type="protein sequence ID" value="AAR32096.1"/>
    <property type="molecule type" value="Genomic_DNA"/>
</dbReference>
<dbReference type="EMBL" id="AL390294">
    <property type="status" value="NOT_ANNOTATED_CDS"/>
    <property type="molecule type" value="Genomic_DNA"/>
</dbReference>
<dbReference type="EMBL" id="CH471072">
    <property type="protein sequence ID" value="EAW86367.1"/>
    <property type="molecule type" value="Genomic_DNA"/>
</dbReference>
<dbReference type="EMBL" id="CH471072">
    <property type="protein sequence ID" value="EAW86368.1"/>
    <property type="molecule type" value="Genomic_DNA"/>
</dbReference>
<dbReference type="EMBL" id="BC003070">
    <property type="protein sequence ID" value="AAH03070.1"/>
    <property type="molecule type" value="mRNA"/>
</dbReference>
<dbReference type="EMBL" id="BC006793">
    <property type="protein sequence ID" value="AAH06793.1"/>
    <property type="molecule type" value="mRNA"/>
</dbReference>
<dbReference type="CCDS" id="CCDS31143.1">
    <molecule id="P23771-2"/>
</dbReference>
<dbReference type="CCDS" id="CCDS7083.1">
    <molecule id="P23771-1"/>
</dbReference>
<dbReference type="PIR" id="A39794">
    <property type="entry name" value="A39794"/>
</dbReference>
<dbReference type="RefSeq" id="NP_001002295.1">
    <molecule id="P23771-2"/>
    <property type="nucleotide sequence ID" value="NM_001002295.2"/>
</dbReference>
<dbReference type="RefSeq" id="NP_002042.1">
    <molecule id="P23771-1"/>
    <property type="nucleotide sequence ID" value="NM_002051.3"/>
</dbReference>
<dbReference type="RefSeq" id="XP_005252499.1">
    <molecule id="P23771-2"/>
    <property type="nucleotide sequence ID" value="XM_005252442.3"/>
</dbReference>
<dbReference type="RefSeq" id="XP_005252500.1">
    <molecule id="P23771-2"/>
    <property type="nucleotide sequence ID" value="XM_005252443.6"/>
</dbReference>
<dbReference type="RefSeq" id="XP_047281000.1">
    <molecule id="P23771-1"/>
    <property type="nucleotide sequence ID" value="XM_047425044.1"/>
</dbReference>
<dbReference type="RefSeq" id="XP_047281001.1">
    <molecule id="P23771-1"/>
    <property type="nucleotide sequence ID" value="XM_047425045.1"/>
</dbReference>
<dbReference type="RefSeq" id="XP_054221503.1">
    <molecule id="P23771-2"/>
    <property type="nucleotide sequence ID" value="XM_054365528.1"/>
</dbReference>
<dbReference type="RefSeq" id="XP_054221504.1">
    <molecule id="P23771-2"/>
    <property type="nucleotide sequence ID" value="XM_054365529.1"/>
</dbReference>
<dbReference type="RefSeq" id="XP_054221505.1">
    <molecule id="P23771-2"/>
    <property type="nucleotide sequence ID" value="XM_054365530.1"/>
</dbReference>
<dbReference type="RefSeq" id="XP_054221506.1">
    <molecule id="P23771-1"/>
    <property type="nucleotide sequence ID" value="XM_054365531.1"/>
</dbReference>
<dbReference type="RefSeq" id="XP_054221507.1">
    <molecule id="P23771-1"/>
    <property type="nucleotide sequence ID" value="XM_054365532.1"/>
</dbReference>
<dbReference type="PDB" id="4HC7">
    <property type="method" value="X-ray"/>
    <property type="resolution" value="2.65 A"/>
    <property type="chains" value="A/B=260-370"/>
</dbReference>
<dbReference type="PDB" id="4HC9">
    <property type="method" value="X-ray"/>
    <property type="resolution" value="1.60 A"/>
    <property type="chains" value="A=260-370"/>
</dbReference>
<dbReference type="PDB" id="4HCA">
    <property type="method" value="X-ray"/>
    <property type="resolution" value="2.80 A"/>
    <property type="chains" value="A=260-370"/>
</dbReference>
<dbReference type="PDBsum" id="4HC7"/>
<dbReference type="PDBsum" id="4HC9"/>
<dbReference type="PDBsum" id="4HCA"/>
<dbReference type="SMR" id="P23771"/>
<dbReference type="BioGRID" id="108895">
    <property type="interactions" value="181"/>
</dbReference>
<dbReference type="CORUM" id="P23771"/>
<dbReference type="DIP" id="DIP-61302N"/>
<dbReference type="FunCoup" id="P23771">
    <property type="interactions" value="3800"/>
</dbReference>
<dbReference type="IntAct" id="P23771">
    <property type="interactions" value="178"/>
</dbReference>
<dbReference type="MINT" id="P23771"/>
<dbReference type="STRING" id="9606.ENSP00000368632"/>
<dbReference type="GlyGen" id="P23771">
    <property type="glycosylation" value="9 sites, 1 O-linked glycan (7 sites)"/>
</dbReference>
<dbReference type="iPTMnet" id="P23771"/>
<dbReference type="PhosphoSitePlus" id="P23771"/>
<dbReference type="BioMuta" id="GATA3"/>
<dbReference type="DMDM" id="120962"/>
<dbReference type="jPOST" id="P23771"/>
<dbReference type="MassIVE" id="P23771"/>
<dbReference type="PaxDb" id="9606-ENSP00000368632"/>
<dbReference type="PeptideAtlas" id="P23771"/>
<dbReference type="ProteomicsDB" id="54162">
    <molecule id="P23771-1"/>
</dbReference>
<dbReference type="ProteomicsDB" id="54163">
    <molecule id="P23771-2"/>
</dbReference>
<dbReference type="Antibodypedia" id="11113">
    <property type="antibodies" value="1144 antibodies from 49 providers"/>
</dbReference>
<dbReference type="DNASU" id="2625"/>
<dbReference type="Ensembl" id="ENST00000346208.4">
    <molecule id="P23771-1"/>
    <property type="protein sequence ID" value="ENSP00000341619.3"/>
    <property type="gene ID" value="ENSG00000107485.18"/>
</dbReference>
<dbReference type="Ensembl" id="ENST00000379328.9">
    <molecule id="P23771-2"/>
    <property type="protein sequence ID" value="ENSP00000368632.3"/>
    <property type="gene ID" value="ENSG00000107485.18"/>
</dbReference>
<dbReference type="GeneID" id="2625"/>
<dbReference type="KEGG" id="hsa:2625"/>
<dbReference type="MANE-Select" id="ENST00000379328.9">
    <molecule id="P23771-2"/>
    <property type="protein sequence ID" value="ENSP00000368632.3"/>
    <property type="RefSeq nucleotide sequence ID" value="NM_001002295.2"/>
    <property type="RefSeq protein sequence ID" value="NP_001002295.1"/>
</dbReference>
<dbReference type="UCSC" id="uc001ijz.4">
    <molecule id="P23771-1"/>
    <property type="organism name" value="human"/>
</dbReference>
<dbReference type="AGR" id="HGNC:4172"/>
<dbReference type="CTD" id="2625"/>
<dbReference type="DisGeNET" id="2625"/>
<dbReference type="GeneCards" id="GATA3"/>
<dbReference type="HGNC" id="HGNC:4172">
    <property type="gene designation" value="GATA3"/>
</dbReference>
<dbReference type="HPA" id="ENSG00000107485">
    <property type="expression patterns" value="Tissue enhanced (parathyroid gland, skin)"/>
</dbReference>
<dbReference type="MalaCards" id="GATA3"/>
<dbReference type="MIM" id="131320">
    <property type="type" value="gene"/>
</dbReference>
<dbReference type="MIM" id="146255">
    <property type="type" value="phenotype"/>
</dbReference>
<dbReference type="neXtProt" id="NX_P23771"/>
<dbReference type="OpenTargets" id="ENSG00000107485"/>
<dbReference type="Orphanet" id="585936">
    <property type="disease" value="B-lymphoblastic leukemia/lymphoma with hyperdiploidy"/>
</dbReference>
<dbReference type="Orphanet" id="2237">
    <property type="disease" value="Hypoparathyroidism-sensorineural deafness-renal disease syndrome"/>
</dbReference>
<dbReference type="PharmGKB" id="PA28586"/>
<dbReference type="VEuPathDB" id="HostDB:ENSG00000107485"/>
<dbReference type="eggNOG" id="KOG1601">
    <property type="taxonomic scope" value="Eukaryota"/>
</dbReference>
<dbReference type="GeneTree" id="ENSGT00940000159247"/>
<dbReference type="HOGENOM" id="CLU_027524_1_0_1"/>
<dbReference type="InParanoid" id="P23771"/>
<dbReference type="OMA" id="ECVKYQV"/>
<dbReference type="OrthoDB" id="2162994at2759"/>
<dbReference type="PAN-GO" id="P23771">
    <property type="GO annotations" value="8 GO annotations based on evolutionary models"/>
</dbReference>
<dbReference type="PhylomeDB" id="P23771"/>
<dbReference type="TreeFam" id="TF315391"/>
<dbReference type="PathwayCommons" id="P23771"/>
<dbReference type="Reactome" id="R-HSA-5689880">
    <property type="pathway name" value="Ub-specific processing proteases"/>
</dbReference>
<dbReference type="Reactome" id="R-HSA-6785807">
    <property type="pathway name" value="Interleukin-4 and Interleukin-13 signaling"/>
</dbReference>
<dbReference type="Reactome" id="R-HSA-8939236">
    <property type="pathway name" value="RUNX1 regulates transcription of genes involved in differentiation of HSCs"/>
</dbReference>
<dbReference type="Reactome" id="R-HSA-9018519">
    <property type="pathway name" value="Estrogen-dependent gene expression"/>
</dbReference>
<dbReference type="Reactome" id="R-HSA-9830364">
    <property type="pathway name" value="Formation of the nephric duct"/>
</dbReference>
<dbReference type="Reactome" id="R-HSA-983231">
    <property type="pathway name" value="Factors involved in megakaryocyte development and platelet production"/>
</dbReference>
<dbReference type="SignaLink" id="P23771"/>
<dbReference type="SIGNOR" id="P23771"/>
<dbReference type="BioGRID-ORCS" id="2625">
    <property type="hits" value="76 hits in 1184 CRISPR screens"/>
</dbReference>
<dbReference type="CD-CODE" id="38EC0B30">
    <property type="entry name" value="Transcriptional condensate"/>
</dbReference>
<dbReference type="CD-CODE" id="462A97B5">
    <property type="entry name" value="Leucocyte nuclear body"/>
</dbReference>
<dbReference type="CD-CODE" id="ECBAC048">
    <property type="entry name" value="MegaTrans enhancer complex"/>
</dbReference>
<dbReference type="ChiTaRS" id="GATA3">
    <property type="organism name" value="human"/>
</dbReference>
<dbReference type="EvolutionaryTrace" id="P23771"/>
<dbReference type="GeneWiki" id="GATA3"/>
<dbReference type="GenomeRNAi" id="2625"/>
<dbReference type="Pharos" id="P23771">
    <property type="development level" value="Tbio"/>
</dbReference>
<dbReference type="PRO" id="PR:P23771"/>
<dbReference type="Proteomes" id="UP000005640">
    <property type="component" value="Chromosome 10"/>
</dbReference>
<dbReference type="RNAct" id="P23771">
    <property type="molecule type" value="protein"/>
</dbReference>
<dbReference type="Bgee" id="ENSG00000107485">
    <property type="expression patterns" value="Expressed in upper leg skin and 154 other cell types or tissues"/>
</dbReference>
<dbReference type="ExpressionAtlas" id="P23771">
    <property type="expression patterns" value="baseline and differential"/>
</dbReference>
<dbReference type="GO" id="GO:0000785">
    <property type="term" value="C:chromatin"/>
    <property type="evidence" value="ECO:0000314"/>
    <property type="project" value="BHF-UCL"/>
</dbReference>
<dbReference type="GO" id="GO:0005654">
    <property type="term" value="C:nucleoplasm"/>
    <property type="evidence" value="ECO:0000314"/>
    <property type="project" value="HPA"/>
</dbReference>
<dbReference type="GO" id="GO:0005634">
    <property type="term" value="C:nucleus"/>
    <property type="evidence" value="ECO:0000314"/>
    <property type="project" value="UniProtKB"/>
</dbReference>
<dbReference type="GO" id="GO:0000987">
    <property type="term" value="F:cis-regulatory region sequence-specific DNA binding"/>
    <property type="evidence" value="ECO:0000314"/>
    <property type="project" value="UniProtKB"/>
</dbReference>
<dbReference type="GO" id="GO:0003677">
    <property type="term" value="F:DNA binding"/>
    <property type="evidence" value="ECO:0000304"/>
    <property type="project" value="ProtInc"/>
</dbReference>
<dbReference type="GO" id="GO:0001228">
    <property type="term" value="F:DNA-binding transcription activator activity, RNA polymerase II-specific"/>
    <property type="evidence" value="ECO:0000314"/>
    <property type="project" value="ARUK-UCL"/>
</dbReference>
<dbReference type="GO" id="GO:0003700">
    <property type="term" value="F:DNA-binding transcription factor activity"/>
    <property type="evidence" value="ECO:0000314"/>
    <property type="project" value="UniProtKB"/>
</dbReference>
<dbReference type="GO" id="GO:0000981">
    <property type="term" value="F:DNA-binding transcription factor activity, RNA polymerase II-specific"/>
    <property type="evidence" value="ECO:0000314"/>
    <property type="project" value="GO_Central"/>
</dbReference>
<dbReference type="GO" id="GO:0001227">
    <property type="term" value="F:DNA-binding transcription repressor activity, RNA polymerase II-specific"/>
    <property type="evidence" value="ECO:0000315"/>
    <property type="project" value="UniProtKB"/>
</dbReference>
<dbReference type="GO" id="GO:0070888">
    <property type="term" value="F:E-box binding"/>
    <property type="evidence" value="ECO:0000314"/>
    <property type="project" value="BHF-UCL"/>
</dbReference>
<dbReference type="GO" id="GO:1990226">
    <property type="term" value="F:histone methyltransferase binding"/>
    <property type="evidence" value="ECO:0007669"/>
    <property type="project" value="Ensembl"/>
</dbReference>
<dbReference type="GO" id="GO:0071837">
    <property type="term" value="F:HMG box domain binding"/>
    <property type="evidence" value="ECO:0000353"/>
    <property type="project" value="UniProtKB"/>
</dbReference>
<dbReference type="GO" id="GO:0042802">
    <property type="term" value="F:identical protein binding"/>
    <property type="evidence" value="ECO:0007669"/>
    <property type="project" value="Ensembl"/>
</dbReference>
<dbReference type="GO" id="GO:0005134">
    <property type="term" value="F:interleukin-2 receptor binding"/>
    <property type="evidence" value="ECO:0007669"/>
    <property type="project" value="Ensembl"/>
</dbReference>
<dbReference type="GO" id="GO:0000978">
    <property type="term" value="F:RNA polymerase II cis-regulatory region sequence-specific DNA binding"/>
    <property type="evidence" value="ECO:0000314"/>
    <property type="project" value="UniProtKB"/>
</dbReference>
<dbReference type="GO" id="GO:0061629">
    <property type="term" value="F:RNA polymerase II-specific DNA-binding transcription factor binding"/>
    <property type="evidence" value="ECO:0000353"/>
    <property type="project" value="BHF-UCL"/>
</dbReference>
<dbReference type="GO" id="GO:1990837">
    <property type="term" value="F:sequence-specific double-stranded DNA binding"/>
    <property type="evidence" value="ECO:0000314"/>
    <property type="project" value="ARUK-UCL"/>
</dbReference>
<dbReference type="GO" id="GO:0000976">
    <property type="term" value="F:transcription cis-regulatory region binding"/>
    <property type="evidence" value="ECO:0000314"/>
    <property type="project" value="UniProtKB"/>
</dbReference>
<dbReference type="GO" id="GO:0001223">
    <property type="term" value="F:transcription coactivator binding"/>
    <property type="evidence" value="ECO:0007669"/>
    <property type="project" value="Ensembl"/>
</dbReference>
<dbReference type="GO" id="GO:0008270">
    <property type="term" value="F:zinc ion binding"/>
    <property type="evidence" value="ECO:0007669"/>
    <property type="project" value="UniProtKB-KW"/>
</dbReference>
<dbReference type="GO" id="GO:0048646">
    <property type="term" value="P:anatomical structure formation involved in morphogenesis"/>
    <property type="evidence" value="ECO:0000250"/>
    <property type="project" value="UniProtKB"/>
</dbReference>
<dbReference type="GO" id="GO:0009653">
    <property type="term" value="P:anatomical structure morphogenesis"/>
    <property type="evidence" value="ECO:0000304"/>
    <property type="project" value="ProtInc"/>
</dbReference>
<dbReference type="GO" id="GO:0003180">
    <property type="term" value="P:aortic valve morphogenesis"/>
    <property type="evidence" value="ECO:0000250"/>
    <property type="project" value="UniProtKB"/>
</dbReference>
<dbReference type="GO" id="GO:0007411">
    <property type="term" value="P:axon guidance"/>
    <property type="evidence" value="ECO:0007669"/>
    <property type="project" value="Ensembl"/>
</dbReference>
<dbReference type="GO" id="GO:0060070">
    <property type="term" value="P:canonical Wnt signaling pathway"/>
    <property type="evidence" value="ECO:0000250"/>
    <property type="project" value="UniProtKB"/>
</dbReference>
<dbReference type="GO" id="GO:0003215">
    <property type="term" value="P:cardiac right ventricle morphogenesis"/>
    <property type="evidence" value="ECO:0000250"/>
    <property type="project" value="UniProtKB"/>
</dbReference>
<dbReference type="GO" id="GO:0051216">
    <property type="term" value="P:cartilage development"/>
    <property type="evidence" value="ECO:0007669"/>
    <property type="project" value="Ensembl"/>
</dbReference>
<dbReference type="GO" id="GO:0045165">
    <property type="term" value="P:cell fate commitment"/>
    <property type="evidence" value="ECO:0000318"/>
    <property type="project" value="GO_Central"/>
</dbReference>
<dbReference type="GO" id="GO:0001709">
    <property type="term" value="P:cell fate determination"/>
    <property type="evidence" value="ECO:0000250"/>
    <property type="project" value="UniProtKB"/>
</dbReference>
<dbReference type="GO" id="GO:0048469">
    <property type="term" value="P:cell maturation"/>
    <property type="evidence" value="ECO:0007669"/>
    <property type="project" value="Ensembl"/>
</dbReference>
<dbReference type="GO" id="GO:0008283">
    <property type="term" value="P:cell population proliferation"/>
    <property type="evidence" value="ECO:0007669"/>
    <property type="project" value="Ensembl"/>
</dbReference>
<dbReference type="GO" id="GO:0071773">
    <property type="term" value="P:cellular response to BMP stimulus"/>
    <property type="evidence" value="ECO:0007669"/>
    <property type="project" value="Ensembl"/>
</dbReference>
<dbReference type="GO" id="GO:0035457">
    <property type="term" value="P:cellular response to interferon-alpha"/>
    <property type="evidence" value="ECO:0000270"/>
    <property type="project" value="UniProtKB"/>
</dbReference>
<dbReference type="GO" id="GO:0071353">
    <property type="term" value="P:cellular response to interleukin-4"/>
    <property type="evidence" value="ECO:0000270"/>
    <property type="project" value="UniProtKB"/>
</dbReference>
<dbReference type="GO" id="GO:0071356">
    <property type="term" value="P:cellular response to tumor necrosis factor"/>
    <property type="evidence" value="ECO:0000270"/>
    <property type="project" value="UniProtKB"/>
</dbReference>
<dbReference type="GO" id="GO:0006338">
    <property type="term" value="P:chromatin remodeling"/>
    <property type="evidence" value="ECO:0007669"/>
    <property type="project" value="Ensembl"/>
</dbReference>
<dbReference type="GO" id="GO:0090102">
    <property type="term" value="P:cochlea development"/>
    <property type="evidence" value="ECO:0007669"/>
    <property type="project" value="Ensembl"/>
</dbReference>
<dbReference type="GO" id="GO:0006952">
    <property type="term" value="P:defense response"/>
    <property type="evidence" value="ECO:0000304"/>
    <property type="project" value="ProtInc"/>
</dbReference>
<dbReference type="GO" id="GO:0048589">
    <property type="term" value="P:developmental growth"/>
    <property type="evidence" value="ECO:0007669"/>
    <property type="project" value="Ensembl"/>
</dbReference>
<dbReference type="GO" id="GO:0043583">
    <property type="term" value="P:ear development"/>
    <property type="evidence" value="ECO:0000315"/>
    <property type="project" value="UniProtKB"/>
</dbReference>
<dbReference type="GO" id="GO:0035162">
    <property type="term" value="P:embryonic hemopoiesis"/>
    <property type="evidence" value="ECO:0007669"/>
    <property type="project" value="Ensembl"/>
</dbReference>
<dbReference type="GO" id="GO:0048568">
    <property type="term" value="P:embryonic organ development"/>
    <property type="evidence" value="ECO:0000318"/>
    <property type="project" value="GO_Central"/>
</dbReference>
<dbReference type="GO" id="GO:0030218">
    <property type="term" value="P:erythrocyte differentiation"/>
    <property type="evidence" value="ECO:0007669"/>
    <property type="project" value="Ensembl"/>
</dbReference>
<dbReference type="GO" id="GO:0006959">
    <property type="term" value="P:humoral immune response"/>
    <property type="evidence" value="ECO:0007669"/>
    <property type="project" value="Ensembl"/>
</dbReference>
<dbReference type="GO" id="GO:0002520">
    <property type="term" value="P:immune system development"/>
    <property type="evidence" value="ECO:0000318"/>
    <property type="project" value="GO_Central"/>
</dbReference>
<dbReference type="GO" id="GO:0001701">
    <property type="term" value="P:in utero embryonic development"/>
    <property type="evidence" value="ECO:0007669"/>
    <property type="project" value="Ensembl"/>
</dbReference>
<dbReference type="GO" id="GO:0006954">
    <property type="term" value="P:inflammatory response"/>
    <property type="evidence" value="ECO:0000250"/>
    <property type="project" value="UniProtKB"/>
</dbReference>
<dbReference type="GO" id="GO:0045087">
    <property type="term" value="P:innate immune response"/>
    <property type="evidence" value="ECO:0007669"/>
    <property type="project" value="UniProtKB-KW"/>
</dbReference>
<dbReference type="GO" id="GO:0042472">
    <property type="term" value="P:inner ear morphogenesis"/>
    <property type="evidence" value="ECO:0007669"/>
    <property type="project" value="Ensembl"/>
</dbReference>
<dbReference type="GO" id="GO:0001822">
    <property type="term" value="P:kidney development"/>
    <property type="evidence" value="ECO:0000315"/>
    <property type="project" value="UniProtKB"/>
</dbReference>
<dbReference type="GO" id="GO:0002088">
    <property type="term" value="P:lens development in camera-type eye"/>
    <property type="evidence" value="ECO:0007669"/>
    <property type="project" value="Ensembl"/>
</dbReference>
<dbReference type="GO" id="GO:0072676">
    <property type="term" value="P:lymphocyte migration"/>
    <property type="evidence" value="ECO:0000314"/>
    <property type="project" value="UniProtKB"/>
</dbReference>
<dbReference type="GO" id="GO:0030225">
    <property type="term" value="P:macrophage differentiation"/>
    <property type="evidence" value="ECO:0000250"/>
    <property type="project" value="UniProtKB"/>
</dbReference>
<dbReference type="GO" id="GO:0008584">
    <property type="term" value="P:male gonad development"/>
    <property type="evidence" value="ECO:0000250"/>
    <property type="project" value="UniProtKB"/>
</dbReference>
<dbReference type="GO" id="GO:0060374">
    <property type="term" value="P:mast cell differentiation"/>
    <property type="evidence" value="ECO:0007669"/>
    <property type="project" value="Ensembl"/>
</dbReference>
<dbReference type="GO" id="GO:0060231">
    <property type="term" value="P:mesenchymal to epithelial transition"/>
    <property type="evidence" value="ECO:0000314"/>
    <property type="project" value="UniProtKB"/>
</dbReference>
<dbReference type="GO" id="GO:0001823">
    <property type="term" value="P:mesonephros development"/>
    <property type="evidence" value="ECO:0000250"/>
    <property type="project" value="UniProtKB"/>
</dbReference>
<dbReference type="GO" id="GO:0045786">
    <property type="term" value="P:negative regulation of cell cycle"/>
    <property type="evidence" value="ECO:0000315"/>
    <property type="project" value="UniProtKB"/>
</dbReference>
<dbReference type="GO" id="GO:2000146">
    <property type="term" value="P:negative regulation of cell motility"/>
    <property type="evidence" value="ECO:0000315"/>
    <property type="project" value="UniProtKB"/>
</dbReference>
<dbReference type="GO" id="GO:0008285">
    <property type="term" value="P:negative regulation of cell population proliferation"/>
    <property type="evidence" value="ECO:0000250"/>
    <property type="project" value="UniProtKB"/>
</dbReference>
<dbReference type="GO" id="GO:2000607">
    <property type="term" value="P:negative regulation of cell proliferation involved in mesonephros development"/>
    <property type="evidence" value="ECO:0000250"/>
    <property type="project" value="UniProtKB"/>
</dbReference>
<dbReference type="GO" id="GO:0045892">
    <property type="term" value="P:negative regulation of DNA-templated transcription"/>
    <property type="evidence" value="ECO:0000315"/>
    <property type="project" value="UniProtKB"/>
</dbReference>
<dbReference type="GO" id="GO:2000352">
    <property type="term" value="P:negative regulation of endothelial cell apoptotic process"/>
    <property type="evidence" value="ECO:0000315"/>
    <property type="project" value="UniProtKB"/>
</dbReference>
<dbReference type="GO" id="GO:0010719">
    <property type="term" value="P:negative regulation of epithelial to mesenchymal transition"/>
    <property type="evidence" value="ECO:0000315"/>
    <property type="project" value="BHF-UCL"/>
</dbReference>
<dbReference type="GO" id="GO:2000703">
    <property type="term" value="P:negative regulation of fibroblast growth factor receptor signaling pathway involved in ureteric bud formation"/>
    <property type="evidence" value="ECO:0000250"/>
    <property type="project" value="UniProtKB"/>
</dbReference>
<dbReference type="GO" id="GO:2000734">
    <property type="term" value="P:negative regulation of glial cell-derived neurotrophic factor receptor signaling pathway involved in ureteric bud formation"/>
    <property type="evidence" value="ECO:0000250"/>
    <property type="project" value="UniProtKB"/>
</dbReference>
<dbReference type="GO" id="GO:0050728">
    <property type="term" value="P:negative regulation of inflammatory response"/>
    <property type="evidence" value="ECO:0000315"/>
    <property type="project" value="UniProtKB"/>
</dbReference>
<dbReference type="GO" id="GO:0032703">
    <property type="term" value="P:negative regulation of interleukin-2 production"/>
    <property type="evidence" value="ECO:0007669"/>
    <property type="project" value="Ensembl"/>
</dbReference>
<dbReference type="GO" id="GO:0033600">
    <property type="term" value="P:negative regulation of mammary gland epithelial cell proliferation"/>
    <property type="evidence" value="ECO:0000314"/>
    <property type="project" value="UniProtKB"/>
</dbReference>
<dbReference type="GO" id="GO:0000122">
    <property type="term" value="P:negative regulation of transcription by RNA polymerase II"/>
    <property type="evidence" value="ECO:0000318"/>
    <property type="project" value="GO_Central"/>
</dbReference>
<dbReference type="GO" id="GO:0032689">
    <property type="term" value="P:negative regulation of type II interferon production"/>
    <property type="evidence" value="ECO:0007669"/>
    <property type="project" value="Ensembl"/>
</dbReference>
<dbReference type="GO" id="GO:0072179">
    <property type="term" value="P:nephric duct formation"/>
    <property type="evidence" value="ECO:0000250"/>
    <property type="project" value="UniProtKB"/>
</dbReference>
<dbReference type="GO" id="GO:0072178">
    <property type="term" value="P:nephric duct morphogenesis"/>
    <property type="evidence" value="ECO:0000250"/>
    <property type="project" value="UniProtKB"/>
</dbReference>
<dbReference type="GO" id="GO:0001764">
    <property type="term" value="P:neuron migration"/>
    <property type="evidence" value="ECO:0007669"/>
    <property type="project" value="Ensembl"/>
</dbReference>
<dbReference type="GO" id="GO:0042421">
    <property type="term" value="P:norepinephrine biosynthetic process"/>
    <property type="evidence" value="ECO:0000250"/>
    <property type="project" value="UniProtKB"/>
</dbReference>
<dbReference type="GO" id="GO:0071599">
    <property type="term" value="P:otic vesicle development"/>
    <property type="evidence" value="ECO:0007669"/>
    <property type="project" value="Ensembl"/>
</dbReference>
<dbReference type="GO" id="GO:0060017">
    <property type="term" value="P:parathyroid gland development"/>
    <property type="evidence" value="ECO:0007669"/>
    <property type="project" value="Ensembl"/>
</dbReference>
<dbReference type="GO" id="GO:0035898">
    <property type="term" value="P:parathyroid hormone secretion"/>
    <property type="evidence" value="ECO:0007669"/>
    <property type="project" value="Ensembl"/>
</dbReference>
<dbReference type="GO" id="GO:0060037">
    <property type="term" value="P:pharyngeal system development"/>
    <property type="evidence" value="ECO:0000250"/>
    <property type="project" value="UniProtKB"/>
</dbReference>
<dbReference type="GO" id="GO:0043491">
    <property type="term" value="P:phosphatidylinositol 3-kinase/protein kinase B signal transduction"/>
    <property type="evidence" value="ECO:0000250"/>
    <property type="project" value="UniProtKB"/>
</dbReference>
<dbReference type="GO" id="GO:0045893">
    <property type="term" value="P:positive regulation of DNA-templated transcription"/>
    <property type="evidence" value="ECO:0000314"/>
    <property type="project" value="UniProtKB"/>
</dbReference>
<dbReference type="GO" id="GO:0010595">
    <property type="term" value="P:positive regulation of endothelial cell migration"/>
    <property type="evidence" value="ECO:0000315"/>
    <property type="project" value="UniProtKB"/>
</dbReference>
<dbReference type="GO" id="GO:0032736">
    <property type="term" value="P:positive regulation of interleukin-13 production"/>
    <property type="evidence" value="ECO:0000314"/>
    <property type="project" value="UniProtKB"/>
</dbReference>
<dbReference type="GO" id="GO:0032753">
    <property type="term" value="P:positive regulation of interleukin-4 production"/>
    <property type="evidence" value="ECO:0000250"/>
    <property type="project" value="UniProtKB"/>
</dbReference>
<dbReference type="GO" id="GO:0032754">
    <property type="term" value="P:positive regulation of interleukin-5 production"/>
    <property type="evidence" value="ECO:0000314"/>
    <property type="project" value="UniProtKB"/>
</dbReference>
<dbReference type="GO" id="GO:1902895">
    <property type="term" value="P:positive regulation of miRNA transcription"/>
    <property type="evidence" value="ECO:0000314"/>
    <property type="project" value="BHF-UCL"/>
</dbReference>
<dbReference type="GO" id="GO:0051897">
    <property type="term" value="P:positive regulation of phosphatidylinositol 3-kinase/protein kinase B signal transduction"/>
    <property type="evidence" value="ECO:0000315"/>
    <property type="project" value="UniProtKB"/>
</dbReference>
<dbReference type="GO" id="GO:0009967">
    <property type="term" value="P:positive regulation of signal transduction"/>
    <property type="evidence" value="ECO:0000315"/>
    <property type="project" value="UniProtKB"/>
</dbReference>
<dbReference type="GO" id="GO:0045582">
    <property type="term" value="P:positive regulation of T cell differentiation"/>
    <property type="evidence" value="ECO:0000250"/>
    <property type="project" value="UniProtKB"/>
</dbReference>
<dbReference type="GO" id="GO:2000553">
    <property type="term" value="P:positive regulation of T-helper 2 cell cytokine production"/>
    <property type="evidence" value="ECO:0007669"/>
    <property type="project" value="Ensembl"/>
</dbReference>
<dbReference type="GO" id="GO:2000611">
    <property type="term" value="P:positive regulation of thyroid hormone generation"/>
    <property type="evidence" value="ECO:0000315"/>
    <property type="project" value="UniProtKB"/>
</dbReference>
<dbReference type="GO" id="GO:0045944">
    <property type="term" value="P:positive regulation of transcription by RNA polymerase II"/>
    <property type="evidence" value="ECO:0000314"/>
    <property type="project" value="UniProtKB"/>
</dbReference>
<dbReference type="GO" id="GO:2000679">
    <property type="term" value="P:positive regulation of transcription regulatory region DNA binding"/>
    <property type="evidence" value="ECO:0000315"/>
    <property type="project" value="UniProtKB"/>
</dbReference>
<dbReference type="GO" id="GO:0072107">
    <property type="term" value="P:positive regulation of ureteric bud formation"/>
    <property type="evidence" value="ECO:0000250"/>
    <property type="project" value="UniProtKB"/>
</dbReference>
<dbReference type="GO" id="GO:0009791">
    <property type="term" value="P:post-embryonic development"/>
    <property type="evidence" value="ECO:0007669"/>
    <property type="project" value="Ensembl"/>
</dbReference>
<dbReference type="GO" id="GO:0002572">
    <property type="term" value="P:pro-T cell differentiation"/>
    <property type="evidence" value="ECO:0007669"/>
    <property type="project" value="Ensembl"/>
</dbReference>
<dbReference type="GO" id="GO:2000683">
    <property type="term" value="P:regulation of cellular response to X-ray"/>
    <property type="evidence" value="ECO:0000315"/>
    <property type="project" value="UniProtKB"/>
</dbReference>
<dbReference type="GO" id="GO:0001817">
    <property type="term" value="P:regulation of cytokine production"/>
    <property type="evidence" value="ECO:0000250"/>
    <property type="project" value="UniProtKB"/>
</dbReference>
<dbReference type="GO" id="GO:0030856">
    <property type="term" value="P:regulation of epithelial cell differentiation"/>
    <property type="evidence" value="ECO:0000318"/>
    <property type="project" value="GO_Central"/>
</dbReference>
<dbReference type="GO" id="GO:2000114">
    <property type="term" value="P:regulation of establishment of cell polarity"/>
    <property type="evidence" value="ECO:0007669"/>
    <property type="project" value="Ensembl"/>
</dbReference>
<dbReference type="GO" id="GO:0072182">
    <property type="term" value="P:regulation of nephron tubule epithelial cell differentiation"/>
    <property type="evidence" value="ECO:0000250"/>
    <property type="project" value="UniProtKB"/>
</dbReference>
<dbReference type="GO" id="GO:0043523">
    <property type="term" value="P:regulation of neuron apoptotic process"/>
    <property type="evidence" value="ECO:0007669"/>
    <property type="project" value="Ensembl"/>
</dbReference>
<dbReference type="GO" id="GO:0010975">
    <property type="term" value="P:regulation of neuron projection development"/>
    <property type="evidence" value="ECO:0007669"/>
    <property type="project" value="Ensembl"/>
</dbReference>
<dbReference type="GO" id="GO:0045622">
    <property type="term" value="P:regulation of T-helper cell differentiation"/>
    <property type="evidence" value="ECO:0007669"/>
    <property type="project" value="Ensembl"/>
</dbReference>
<dbReference type="GO" id="GO:0043627">
    <property type="term" value="P:response to estrogen"/>
    <property type="evidence" value="ECO:0000270"/>
    <property type="project" value="UniProtKB"/>
</dbReference>
<dbReference type="GO" id="GO:0045471">
    <property type="term" value="P:response to ethanol"/>
    <property type="evidence" value="ECO:0007669"/>
    <property type="project" value="Ensembl"/>
</dbReference>
<dbReference type="GO" id="GO:0010332">
    <property type="term" value="P:response to gamma radiation"/>
    <property type="evidence" value="ECO:0007669"/>
    <property type="project" value="Ensembl"/>
</dbReference>
<dbReference type="GO" id="GO:0009615">
    <property type="term" value="P:response to virus"/>
    <property type="evidence" value="ECO:0000270"/>
    <property type="project" value="UniProtKB"/>
</dbReference>
<dbReference type="GO" id="GO:0009410">
    <property type="term" value="P:response to xenobiotic stimulus"/>
    <property type="evidence" value="ECO:0007669"/>
    <property type="project" value="Ensembl"/>
</dbReference>
<dbReference type="GO" id="GO:0007165">
    <property type="term" value="P:signal transduction"/>
    <property type="evidence" value="ECO:0000250"/>
    <property type="project" value="UniProtKB"/>
</dbReference>
<dbReference type="GO" id="GO:0048485">
    <property type="term" value="P:sympathetic nervous system development"/>
    <property type="evidence" value="ECO:0000250"/>
    <property type="project" value="UniProtKB"/>
</dbReference>
<dbReference type="GO" id="GO:0030217">
    <property type="term" value="P:T cell differentiation"/>
    <property type="evidence" value="ECO:0000314"/>
    <property type="project" value="MGI"/>
</dbReference>
<dbReference type="GO" id="GO:0050852">
    <property type="term" value="P:T cell receptor signaling pathway"/>
    <property type="evidence" value="ECO:0000250"/>
    <property type="project" value="UniProtKB"/>
</dbReference>
<dbReference type="GO" id="GO:0045064">
    <property type="term" value="P:T-helper 2 cell differentiation"/>
    <property type="evidence" value="ECO:0000314"/>
    <property type="project" value="UniProtKB"/>
</dbReference>
<dbReference type="GO" id="GO:0045061">
    <property type="term" value="P:thymic T cell selection"/>
    <property type="evidence" value="ECO:0007669"/>
    <property type="project" value="Ensembl"/>
</dbReference>
<dbReference type="GO" id="GO:0048538">
    <property type="term" value="P:thymus development"/>
    <property type="evidence" value="ECO:0007669"/>
    <property type="project" value="Ensembl"/>
</dbReference>
<dbReference type="GO" id="GO:0031929">
    <property type="term" value="P:TOR signaling"/>
    <property type="evidence" value="ECO:0000250"/>
    <property type="project" value="UniProtKB"/>
</dbReference>
<dbReference type="GO" id="GO:0006366">
    <property type="term" value="P:transcription by RNA polymerase II"/>
    <property type="evidence" value="ECO:0007669"/>
    <property type="project" value="Ensembl"/>
</dbReference>
<dbReference type="GO" id="GO:0001806">
    <property type="term" value="P:type IV hypersensitivity"/>
    <property type="evidence" value="ECO:0007669"/>
    <property type="project" value="Ensembl"/>
</dbReference>
<dbReference type="GO" id="GO:0035799">
    <property type="term" value="P:ureter maturation"/>
    <property type="evidence" value="ECO:0007669"/>
    <property type="project" value="Ensembl"/>
</dbReference>
<dbReference type="GO" id="GO:0072197">
    <property type="term" value="P:ureter morphogenesis"/>
    <property type="evidence" value="ECO:0007669"/>
    <property type="project" value="Ensembl"/>
</dbReference>
<dbReference type="GO" id="GO:0060676">
    <property type="term" value="P:ureteric bud formation"/>
    <property type="evidence" value="ECO:0000250"/>
    <property type="project" value="UniProtKB"/>
</dbReference>
<dbReference type="GO" id="GO:0060065">
    <property type="term" value="P:uterus development"/>
    <property type="evidence" value="ECO:0000250"/>
    <property type="project" value="UniProtKB"/>
</dbReference>
<dbReference type="GO" id="GO:0003281">
    <property type="term" value="P:ventricular septum development"/>
    <property type="evidence" value="ECO:0000250"/>
    <property type="project" value="UniProtKB"/>
</dbReference>
<dbReference type="CDD" id="cd00202">
    <property type="entry name" value="ZnF_GATA"/>
    <property type="match status" value="2"/>
</dbReference>
<dbReference type="DisProt" id="DP02798"/>
<dbReference type="FunFam" id="3.30.50.10:FF:000001">
    <property type="entry name" value="GATA transcription factor (GATAd)"/>
    <property type="match status" value="1"/>
</dbReference>
<dbReference type="FunFam" id="3.30.50.10:FF:000032">
    <property type="entry name" value="Transcription factor GATA-3"/>
    <property type="match status" value="1"/>
</dbReference>
<dbReference type="Gene3D" id="3.30.50.10">
    <property type="entry name" value="Erythroid Transcription Factor GATA-1, subunit A"/>
    <property type="match status" value="2"/>
</dbReference>
<dbReference type="InterPro" id="IPR016374">
    <property type="entry name" value="TF_GATA-2/3"/>
</dbReference>
<dbReference type="InterPro" id="IPR039355">
    <property type="entry name" value="Transcription_factor_GATA"/>
</dbReference>
<dbReference type="InterPro" id="IPR000679">
    <property type="entry name" value="Znf_GATA"/>
</dbReference>
<dbReference type="InterPro" id="IPR013088">
    <property type="entry name" value="Znf_NHR/GATA"/>
</dbReference>
<dbReference type="PANTHER" id="PTHR10071:SF106">
    <property type="entry name" value="TRANS-ACTING T-CELL-SPECIFIC TRANSCRIPTION FACTOR GATA-3"/>
    <property type="match status" value="1"/>
</dbReference>
<dbReference type="PANTHER" id="PTHR10071">
    <property type="entry name" value="TRANSCRIPTION FACTOR GATA FAMILY MEMBER"/>
    <property type="match status" value="1"/>
</dbReference>
<dbReference type="Pfam" id="PF00320">
    <property type="entry name" value="GATA"/>
    <property type="match status" value="2"/>
</dbReference>
<dbReference type="PIRSF" id="PIRSF003027">
    <property type="entry name" value="TF_GATA-1/2/3"/>
    <property type="match status" value="1"/>
</dbReference>
<dbReference type="PRINTS" id="PR00619">
    <property type="entry name" value="GATAZNFINGER"/>
</dbReference>
<dbReference type="SMART" id="SM00401">
    <property type="entry name" value="ZnF_GATA"/>
    <property type="match status" value="2"/>
</dbReference>
<dbReference type="SUPFAM" id="SSF57716">
    <property type="entry name" value="Glucocorticoid receptor-like (DNA-binding domain)"/>
    <property type="match status" value="2"/>
</dbReference>
<dbReference type="PROSITE" id="PS00344">
    <property type="entry name" value="GATA_ZN_FINGER_1"/>
    <property type="match status" value="2"/>
</dbReference>
<dbReference type="PROSITE" id="PS50114">
    <property type="entry name" value="GATA_ZN_FINGER_2"/>
    <property type="match status" value="2"/>
</dbReference>
<evidence type="ECO:0000250" key="1"/>
<evidence type="ECO:0000250" key="2">
    <source>
        <dbReference type="UniProtKB" id="P23772"/>
    </source>
</evidence>
<evidence type="ECO:0000255" key="3">
    <source>
        <dbReference type="PROSITE-ProRule" id="PRU00094"/>
    </source>
</evidence>
<evidence type="ECO:0000256" key="4">
    <source>
        <dbReference type="SAM" id="MobiDB-lite"/>
    </source>
</evidence>
<evidence type="ECO:0000269" key="5">
    <source>
    </source>
</evidence>
<evidence type="ECO:0000269" key="6">
    <source>
    </source>
</evidence>
<evidence type="ECO:0000269" key="7">
    <source>
    </source>
</evidence>
<evidence type="ECO:0000269" key="8">
    <source>
    </source>
</evidence>
<evidence type="ECO:0000269" key="9">
    <source>
    </source>
</evidence>
<evidence type="ECO:0000269" key="10">
    <source>
    </source>
</evidence>
<evidence type="ECO:0000269" key="11">
    <source ref="5"/>
</evidence>
<evidence type="ECO:0000303" key="12">
    <source>
    </source>
</evidence>
<evidence type="ECO:0000303" key="13">
    <source>
    </source>
</evidence>
<evidence type="ECO:0000303" key="14">
    <source>
    </source>
</evidence>
<evidence type="ECO:0000305" key="15"/>
<evidence type="ECO:0007744" key="16">
    <source>
    </source>
</evidence>
<evidence type="ECO:0007829" key="17">
    <source>
        <dbReference type="PDB" id="4HC7"/>
    </source>
</evidence>
<evidence type="ECO:0007829" key="18">
    <source>
        <dbReference type="PDB" id="4HC9"/>
    </source>
</evidence>